<feature type="chain" id="PRO_0000074948" description="Phosphoribosylglycinamide formyltransferase">
    <location>
        <begin position="1"/>
        <end position="188"/>
    </location>
</feature>
<feature type="active site" description="Proton donor" evidence="1">
    <location>
        <position position="110"/>
    </location>
</feature>
<feature type="binding site" evidence="1">
    <location>
        <begin position="12"/>
        <end position="14"/>
    </location>
    <ligand>
        <name>N(1)-(5-phospho-beta-D-ribosyl)glycinamide</name>
        <dbReference type="ChEBI" id="CHEBI:143788"/>
    </ligand>
</feature>
<feature type="binding site" evidence="1">
    <location>
        <position position="66"/>
    </location>
    <ligand>
        <name>(6R)-10-formyltetrahydrofolate</name>
        <dbReference type="ChEBI" id="CHEBI:195366"/>
    </ligand>
</feature>
<feature type="binding site" evidence="1">
    <location>
        <begin position="91"/>
        <end position="94"/>
    </location>
    <ligand>
        <name>(6R)-10-formyltetrahydrofolate</name>
        <dbReference type="ChEBI" id="CHEBI:195366"/>
    </ligand>
</feature>
<feature type="binding site" evidence="1">
    <location>
        <position position="108"/>
    </location>
    <ligand>
        <name>(6R)-10-formyltetrahydrofolate</name>
        <dbReference type="ChEBI" id="CHEBI:195366"/>
    </ligand>
</feature>
<feature type="site" description="Raises pKa of active site His" evidence="1">
    <location>
        <position position="146"/>
    </location>
</feature>
<reference key="1">
    <citation type="journal article" date="2004" name="Proc. Natl. Acad. Sci. U.S.A.">
        <title>Complete genomes of two clinical Staphylococcus aureus strains: evidence for the rapid evolution of virulence and drug resistance.</title>
        <authorList>
            <person name="Holden M.T.G."/>
            <person name="Feil E.J."/>
            <person name="Lindsay J.A."/>
            <person name="Peacock S.J."/>
            <person name="Day N.P.J."/>
            <person name="Enright M.C."/>
            <person name="Foster T.J."/>
            <person name="Moore C.E."/>
            <person name="Hurst L."/>
            <person name="Atkin R."/>
            <person name="Barron A."/>
            <person name="Bason N."/>
            <person name="Bentley S.D."/>
            <person name="Chillingworth C."/>
            <person name="Chillingworth T."/>
            <person name="Churcher C."/>
            <person name="Clark L."/>
            <person name="Corton C."/>
            <person name="Cronin A."/>
            <person name="Doggett J."/>
            <person name="Dowd L."/>
            <person name="Feltwell T."/>
            <person name="Hance Z."/>
            <person name="Harris B."/>
            <person name="Hauser H."/>
            <person name="Holroyd S."/>
            <person name="Jagels K."/>
            <person name="James K.D."/>
            <person name="Lennard N."/>
            <person name="Line A."/>
            <person name="Mayes R."/>
            <person name="Moule S."/>
            <person name="Mungall K."/>
            <person name="Ormond D."/>
            <person name="Quail M.A."/>
            <person name="Rabbinowitsch E."/>
            <person name="Rutherford K.M."/>
            <person name="Sanders M."/>
            <person name="Sharp S."/>
            <person name="Simmonds M."/>
            <person name="Stevens K."/>
            <person name="Whitehead S."/>
            <person name="Barrell B.G."/>
            <person name="Spratt B.G."/>
            <person name="Parkhill J."/>
        </authorList>
    </citation>
    <scope>NUCLEOTIDE SEQUENCE [LARGE SCALE GENOMIC DNA]</scope>
    <source>
        <strain>MRSA252</strain>
    </source>
</reference>
<name>PUR3_STAAR</name>
<accession>Q6GI12</accession>
<sequence>MVKIAIFASGSGSNFENIVEHVESGKLENIEVTALYTDHQNAFCIDRAKKHDIPVYINEPKQFGSKAAYEQHLVTLLNEDKVEWIILAGYMRLIGPDLLASFEGKILNIHPSLLPKYKGIDAIGQAYHSGDTITGSTVHYVDSGMDTGEIIEQRQCDIRPDDSKEQLEEKVKKLEYELYPSVIAKIVK</sequence>
<protein>
    <recommendedName>
        <fullName evidence="1">Phosphoribosylglycinamide formyltransferase</fullName>
        <ecNumber evidence="1">2.1.2.2</ecNumber>
    </recommendedName>
    <alternativeName>
        <fullName evidence="1">5'-phosphoribosylglycinamide transformylase</fullName>
    </alternativeName>
    <alternativeName>
        <fullName evidence="1">GAR transformylase</fullName>
        <shortName evidence="1">GART</shortName>
    </alternativeName>
</protein>
<gene>
    <name evidence="1" type="primary">purN</name>
    <name type="ordered locus">SAR1046</name>
</gene>
<comment type="function">
    <text evidence="1">Catalyzes the transfer of a formyl group from 10-formyltetrahydrofolate to 5-phospho-ribosyl-glycinamide (GAR), producing 5-phospho-ribosyl-N-formylglycinamide (FGAR) and tetrahydrofolate.</text>
</comment>
<comment type="catalytic activity">
    <reaction evidence="1">
        <text>N(1)-(5-phospho-beta-D-ribosyl)glycinamide + (6R)-10-formyltetrahydrofolate = N(2)-formyl-N(1)-(5-phospho-beta-D-ribosyl)glycinamide + (6S)-5,6,7,8-tetrahydrofolate + H(+)</text>
        <dbReference type="Rhea" id="RHEA:15053"/>
        <dbReference type="ChEBI" id="CHEBI:15378"/>
        <dbReference type="ChEBI" id="CHEBI:57453"/>
        <dbReference type="ChEBI" id="CHEBI:143788"/>
        <dbReference type="ChEBI" id="CHEBI:147286"/>
        <dbReference type="ChEBI" id="CHEBI:195366"/>
        <dbReference type="EC" id="2.1.2.2"/>
    </reaction>
</comment>
<comment type="pathway">
    <text evidence="1">Purine metabolism; IMP biosynthesis via de novo pathway; N(2)-formyl-N(1)-(5-phospho-D-ribosyl)glycinamide from N(1)-(5-phospho-D-ribosyl)glycinamide (10-formyl THF route): step 1/1.</text>
</comment>
<comment type="similarity">
    <text evidence="1">Belongs to the GART family.</text>
</comment>
<keyword id="KW-0658">Purine biosynthesis</keyword>
<keyword id="KW-0808">Transferase</keyword>
<evidence type="ECO:0000255" key="1">
    <source>
        <dbReference type="HAMAP-Rule" id="MF_01930"/>
    </source>
</evidence>
<proteinExistence type="inferred from homology"/>
<dbReference type="EC" id="2.1.2.2" evidence="1"/>
<dbReference type="EMBL" id="BX571856">
    <property type="protein sequence ID" value="CAG40049.1"/>
    <property type="molecule type" value="Genomic_DNA"/>
</dbReference>
<dbReference type="RefSeq" id="WP_000238673.1">
    <property type="nucleotide sequence ID" value="NC_002952.2"/>
</dbReference>
<dbReference type="SMR" id="Q6GI12"/>
<dbReference type="KEGG" id="sar:SAR1046"/>
<dbReference type="HOGENOM" id="CLU_038395_1_3_9"/>
<dbReference type="UniPathway" id="UPA00074">
    <property type="reaction ID" value="UER00126"/>
</dbReference>
<dbReference type="Proteomes" id="UP000000596">
    <property type="component" value="Chromosome"/>
</dbReference>
<dbReference type="GO" id="GO:0005829">
    <property type="term" value="C:cytosol"/>
    <property type="evidence" value="ECO:0007669"/>
    <property type="project" value="TreeGrafter"/>
</dbReference>
<dbReference type="GO" id="GO:0004644">
    <property type="term" value="F:phosphoribosylglycinamide formyltransferase activity"/>
    <property type="evidence" value="ECO:0007669"/>
    <property type="project" value="UniProtKB-UniRule"/>
</dbReference>
<dbReference type="GO" id="GO:0006189">
    <property type="term" value="P:'de novo' IMP biosynthetic process"/>
    <property type="evidence" value="ECO:0007669"/>
    <property type="project" value="UniProtKB-UniRule"/>
</dbReference>
<dbReference type="CDD" id="cd08645">
    <property type="entry name" value="FMT_core_GART"/>
    <property type="match status" value="1"/>
</dbReference>
<dbReference type="Gene3D" id="3.40.50.170">
    <property type="entry name" value="Formyl transferase, N-terminal domain"/>
    <property type="match status" value="1"/>
</dbReference>
<dbReference type="HAMAP" id="MF_01930">
    <property type="entry name" value="PurN"/>
    <property type="match status" value="1"/>
</dbReference>
<dbReference type="InterPro" id="IPR002376">
    <property type="entry name" value="Formyl_transf_N"/>
</dbReference>
<dbReference type="InterPro" id="IPR036477">
    <property type="entry name" value="Formyl_transf_N_sf"/>
</dbReference>
<dbReference type="InterPro" id="IPR004607">
    <property type="entry name" value="GART"/>
</dbReference>
<dbReference type="NCBIfam" id="TIGR00639">
    <property type="entry name" value="PurN"/>
    <property type="match status" value="1"/>
</dbReference>
<dbReference type="PANTHER" id="PTHR43369">
    <property type="entry name" value="PHOSPHORIBOSYLGLYCINAMIDE FORMYLTRANSFERASE"/>
    <property type="match status" value="1"/>
</dbReference>
<dbReference type="PANTHER" id="PTHR43369:SF2">
    <property type="entry name" value="PHOSPHORIBOSYLGLYCINAMIDE FORMYLTRANSFERASE"/>
    <property type="match status" value="1"/>
</dbReference>
<dbReference type="Pfam" id="PF00551">
    <property type="entry name" value="Formyl_trans_N"/>
    <property type="match status" value="1"/>
</dbReference>
<dbReference type="SUPFAM" id="SSF53328">
    <property type="entry name" value="Formyltransferase"/>
    <property type="match status" value="1"/>
</dbReference>
<organism>
    <name type="scientific">Staphylococcus aureus (strain MRSA252)</name>
    <dbReference type="NCBI Taxonomy" id="282458"/>
    <lineage>
        <taxon>Bacteria</taxon>
        <taxon>Bacillati</taxon>
        <taxon>Bacillota</taxon>
        <taxon>Bacilli</taxon>
        <taxon>Bacillales</taxon>
        <taxon>Staphylococcaceae</taxon>
        <taxon>Staphylococcus</taxon>
    </lineage>
</organism>